<comment type="function">
    <text evidence="1">Provides the precursors necessary for DNA synthesis. Catalyzes the biosynthesis of deoxyribonucleotides from the corresponding ribonucleotides (By similarity).</text>
</comment>
<comment type="catalytic activity">
    <reaction>
        <text>a 2'-deoxyribonucleoside 5'-diphosphate + [thioredoxin]-disulfide + H2O = a ribonucleoside 5'-diphosphate + [thioredoxin]-dithiol</text>
        <dbReference type="Rhea" id="RHEA:23252"/>
        <dbReference type="Rhea" id="RHEA-COMP:10698"/>
        <dbReference type="Rhea" id="RHEA-COMP:10700"/>
        <dbReference type="ChEBI" id="CHEBI:15377"/>
        <dbReference type="ChEBI" id="CHEBI:29950"/>
        <dbReference type="ChEBI" id="CHEBI:50058"/>
        <dbReference type="ChEBI" id="CHEBI:57930"/>
        <dbReference type="ChEBI" id="CHEBI:73316"/>
        <dbReference type="EC" id="1.17.4.1"/>
    </reaction>
</comment>
<comment type="cofactor">
    <cofactor evidence="1">
        <name>Fe cation</name>
        <dbReference type="ChEBI" id="CHEBI:24875"/>
    </cofactor>
    <text evidence="1">Binds 2 iron ions per subunit.</text>
</comment>
<comment type="subunit">
    <text evidence="1">Tetramer of two alpha and two beta subunits.</text>
</comment>
<comment type="similarity">
    <text evidence="2">Belongs to the ribonucleoside diphosphate reductase small chain family.</text>
</comment>
<feature type="chain" id="PRO_0000190468" description="Ribonucleoside-diphosphate reductase subunit beta">
    <location>
        <begin position="1"/>
        <end position="345"/>
    </location>
</feature>
<feature type="active site" evidence="1">
    <location>
        <position position="125"/>
    </location>
</feature>
<feature type="binding site" evidence="1">
    <location>
        <position position="88"/>
    </location>
    <ligand>
        <name>Fe cation</name>
        <dbReference type="ChEBI" id="CHEBI:24875"/>
        <label>1</label>
    </ligand>
</feature>
<feature type="binding site" evidence="1">
    <location>
        <position position="118"/>
    </location>
    <ligand>
        <name>Fe cation</name>
        <dbReference type="ChEBI" id="CHEBI:24875"/>
        <label>1</label>
    </ligand>
</feature>
<feature type="binding site" evidence="1">
    <location>
        <position position="118"/>
    </location>
    <ligand>
        <name>Fe cation</name>
        <dbReference type="ChEBI" id="CHEBI:24875"/>
        <label>2</label>
    </ligand>
</feature>
<feature type="binding site" evidence="1">
    <location>
        <position position="121"/>
    </location>
    <ligand>
        <name>Fe cation</name>
        <dbReference type="ChEBI" id="CHEBI:24875"/>
        <label>1</label>
    </ligand>
</feature>
<feature type="binding site" evidence="1">
    <location>
        <position position="185"/>
    </location>
    <ligand>
        <name>Fe cation</name>
        <dbReference type="ChEBI" id="CHEBI:24875"/>
        <label>2</label>
    </ligand>
</feature>
<feature type="binding site" evidence="1">
    <location>
        <position position="219"/>
    </location>
    <ligand>
        <name>Fe cation</name>
        <dbReference type="ChEBI" id="CHEBI:24875"/>
        <label>2</label>
    </ligand>
</feature>
<feature type="binding site" evidence="1">
    <location>
        <position position="222"/>
    </location>
    <ligand>
        <name>Fe cation</name>
        <dbReference type="ChEBI" id="CHEBI:24875"/>
        <label>2</label>
    </ligand>
</feature>
<feature type="strand" evidence="3">
    <location>
        <begin position="21"/>
        <end position="23"/>
    </location>
</feature>
<feature type="helix" evidence="3">
    <location>
        <begin position="40"/>
        <end position="49"/>
    </location>
</feature>
<feature type="helix" evidence="3">
    <location>
        <begin position="54"/>
        <end position="56"/>
    </location>
</feature>
<feature type="helix" evidence="3">
    <location>
        <begin position="60"/>
        <end position="65"/>
    </location>
</feature>
<feature type="helix" evidence="3">
    <location>
        <begin position="66"/>
        <end position="68"/>
    </location>
</feature>
<feature type="helix" evidence="3">
    <location>
        <begin position="71"/>
        <end position="86"/>
    </location>
</feature>
<feature type="turn" evidence="3">
    <location>
        <begin position="87"/>
        <end position="90"/>
    </location>
</feature>
<feature type="helix" evidence="3">
    <location>
        <begin position="94"/>
        <end position="99"/>
    </location>
</feature>
<feature type="helix" evidence="3">
    <location>
        <begin position="105"/>
        <end position="132"/>
    </location>
</feature>
<feature type="helix" evidence="3">
    <location>
        <begin position="135"/>
        <end position="146"/>
    </location>
</feature>
<feature type="helix" evidence="3">
    <location>
        <begin position="149"/>
        <end position="167"/>
    </location>
</feature>
<feature type="helix" evidence="3">
    <location>
        <begin position="171"/>
        <end position="186"/>
    </location>
</feature>
<feature type="turn" evidence="3">
    <location>
        <begin position="187"/>
        <end position="189"/>
    </location>
</feature>
<feature type="helix" evidence="3">
    <location>
        <begin position="190"/>
        <end position="201"/>
    </location>
</feature>
<feature type="helix" evidence="3">
    <location>
        <begin position="206"/>
        <end position="236"/>
    </location>
</feature>
<feature type="helix" evidence="3">
    <location>
        <begin position="238"/>
        <end position="240"/>
    </location>
</feature>
<feature type="helix" evidence="3">
    <location>
        <begin position="243"/>
        <end position="267"/>
    </location>
</feature>
<feature type="turn" evidence="3">
    <location>
        <begin position="268"/>
        <end position="270"/>
    </location>
</feature>
<feature type="helix" evidence="3">
    <location>
        <begin position="277"/>
        <end position="294"/>
    </location>
</feature>
<name>RIR2_HALH5</name>
<organism>
    <name type="scientific">Halalkalibacterium halodurans (strain ATCC BAA-125 / DSM 18197 / FERM 7344 / JCM 9153 / C-125)</name>
    <name type="common">Bacillus halodurans</name>
    <dbReference type="NCBI Taxonomy" id="272558"/>
    <lineage>
        <taxon>Bacteria</taxon>
        <taxon>Bacillati</taxon>
        <taxon>Bacillota</taxon>
        <taxon>Bacilli</taxon>
        <taxon>Bacillales</taxon>
        <taxon>Bacillaceae</taxon>
        <taxon>Halalkalibacterium (ex Joshi et al. 2022)</taxon>
    </lineage>
</organism>
<keyword id="KW-0002">3D-structure</keyword>
<keyword id="KW-0215">Deoxyribonucleotide synthesis</keyword>
<keyword id="KW-0408">Iron</keyword>
<keyword id="KW-0479">Metal-binding</keyword>
<keyword id="KW-0560">Oxidoreductase</keyword>
<keyword id="KW-1185">Reference proteome</keyword>
<gene>
    <name type="primary">nrdB</name>
    <name type="ordered locus">BH0502</name>
</gene>
<reference key="1">
    <citation type="journal article" date="2000" name="Nucleic Acids Res.">
        <title>Complete genome sequence of the alkaliphilic bacterium Bacillus halodurans and genomic sequence comparison with Bacillus subtilis.</title>
        <authorList>
            <person name="Takami H."/>
            <person name="Nakasone K."/>
            <person name="Takaki Y."/>
            <person name="Maeno G."/>
            <person name="Sasaki R."/>
            <person name="Masui N."/>
            <person name="Fuji F."/>
            <person name="Hirama C."/>
            <person name="Nakamura Y."/>
            <person name="Ogasawara N."/>
            <person name="Kuhara S."/>
            <person name="Horikoshi K."/>
        </authorList>
    </citation>
    <scope>NUCLEOTIDE SEQUENCE [LARGE SCALE GENOMIC DNA]</scope>
    <source>
        <strain>ATCC BAA-125 / DSM 18197 / FERM 7344 / JCM 9153 / C-125</strain>
    </source>
</reference>
<accession>Q9KFH7</accession>
<evidence type="ECO:0000250" key="1"/>
<evidence type="ECO:0000305" key="2"/>
<evidence type="ECO:0007829" key="3">
    <source>
        <dbReference type="PDB" id="2RCC"/>
    </source>
</evidence>
<proteinExistence type="evidence at protein level"/>
<dbReference type="EC" id="1.17.4.1"/>
<dbReference type="EMBL" id="BA000004">
    <property type="protein sequence ID" value="BAB04221.1"/>
    <property type="molecule type" value="Genomic_DNA"/>
</dbReference>
<dbReference type="PIR" id="F83712">
    <property type="entry name" value="F83712"/>
</dbReference>
<dbReference type="RefSeq" id="WP_010896680.1">
    <property type="nucleotide sequence ID" value="NC_002570.2"/>
</dbReference>
<dbReference type="PDB" id="2RCC">
    <property type="method" value="X-ray"/>
    <property type="resolution" value="1.90 A"/>
    <property type="chains" value="A/B/C=1-345"/>
</dbReference>
<dbReference type="PDBsum" id="2RCC"/>
<dbReference type="SMR" id="Q9KFH7"/>
<dbReference type="STRING" id="272558.gene:10726355"/>
<dbReference type="KEGG" id="bha:BH0502"/>
<dbReference type="eggNOG" id="COG0208">
    <property type="taxonomic scope" value="Bacteria"/>
</dbReference>
<dbReference type="HOGENOM" id="CLU_035339_1_0_9"/>
<dbReference type="OrthoDB" id="9766544at2"/>
<dbReference type="EvolutionaryTrace" id="Q9KFH7"/>
<dbReference type="Proteomes" id="UP000001258">
    <property type="component" value="Chromosome"/>
</dbReference>
<dbReference type="GO" id="GO:0046872">
    <property type="term" value="F:metal ion binding"/>
    <property type="evidence" value="ECO:0007669"/>
    <property type="project" value="UniProtKB-KW"/>
</dbReference>
<dbReference type="GO" id="GO:0004748">
    <property type="term" value="F:ribonucleoside-diphosphate reductase activity, thioredoxin disulfide as acceptor"/>
    <property type="evidence" value="ECO:0007669"/>
    <property type="project" value="UniProtKB-EC"/>
</dbReference>
<dbReference type="GO" id="GO:0009263">
    <property type="term" value="P:deoxyribonucleotide biosynthetic process"/>
    <property type="evidence" value="ECO:0007669"/>
    <property type="project" value="UniProtKB-KW"/>
</dbReference>
<dbReference type="CDD" id="cd01049">
    <property type="entry name" value="RNRR2"/>
    <property type="match status" value="1"/>
</dbReference>
<dbReference type="Gene3D" id="1.10.620.20">
    <property type="entry name" value="Ribonucleotide Reductase, subunit A"/>
    <property type="match status" value="1"/>
</dbReference>
<dbReference type="InterPro" id="IPR009078">
    <property type="entry name" value="Ferritin-like_SF"/>
</dbReference>
<dbReference type="InterPro" id="IPR012348">
    <property type="entry name" value="RNR-like"/>
</dbReference>
<dbReference type="InterPro" id="IPR033909">
    <property type="entry name" value="RNR_small"/>
</dbReference>
<dbReference type="InterPro" id="IPR000358">
    <property type="entry name" value="RNR_small_fam"/>
</dbReference>
<dbReference type="NCBIfam" id="NF007184">
    <property type="entry name" value="PRK09614.1-3"/>
    <property type="match status" value="1"/>
</dbReference>
<dbReference type="PANTHER" id="PTHR23409">
    <property type="entry name" value="RIBONUCLEOSIDE-DIPHOSPHATE REDUCTASE SMALL CHAIN"/>
    <property type="match status" value="1"/>
</dbReference>
<dbReference type="PANTHER" id="PTHR23409:SF18">
    <property type="entry name" value="RIBONUCLEOSIDE-DIPHOSPHATE REDUCTASE SUBUNIT M2"/>
    <property type="match status" value="1"/>
</dbReference>
<dbReference type="Pfam" id="PF00268">
    <property type="entry name" value="Ribonuc_red_sm"/>
    <property type="match status" value="1"/>
</dbReference>
<dbReference type="PIRSF" id="PIRSF000355">
    <property type="entry name" value="NrdB"/>
    <property type="match status" value="1"/>
</dbReference>
<dbReference type="SUPFAM" id="SSF47240">
    <property type="entry name" value="Ferritin-like"/>
    <property type="match status" value="1"/>
</dbReference>
<sequence>MEQLQKRKIYDTTASNASTGILNGKSSNVLNWDDVRFSWAYPLYKNMLANFWTPFEINMSHDAKQFPTLTETEQEAFKKIIGLLAFLDSVQTDYSMRAAEYLTDSSLAALMSVLSFQEVVHNQSYSYVLSSLVPKATQDEIFEYWKHDDVLKERNEFIIDGYEKFVDNPTPKTFLESIVYDVILEGLNFYSGFAFFYNLARNQKMVSTSTMINYINRDEQLHVYLFTNIFKELLVEFPELNTEETKTFVKTTLMKAADLEKDWFRYIIGDKIPGINPEDMETYISFIANKRAVQLGMEKPYPEIKHNPMKWIRAYEDVNSGKSDFFEQKSRQYAKVSADNGFDEL</sequence>
<protein>
    <recommendedName>
        <fullName>Ribonucleoside-diphosphate reductase subunit beta</fullName>
        <ecNumber>1.17.4.1</ecNumber>
    </recommendedName>
    <alternativeName>
        <fullName>Ribonucleotide reductase small subunit</fullName>
    </alternativeName>
</protein>